<dbReference type="EC" id="2.7.2.3" evidence="1"/>
<dbReference type="EMBL" id="AJ938182">
    <property type="protein sequence ID" value="CAI80417.1"/>
    <property type="molecule type" value="Genomic_DNA"/>
</dbReference>
<dbReference type="RefSeq" id="WP_001074739.1">
    <property type="nucleotide sequence ID" value="NC_007622.1"/>
</dbReference>
<dbReference type="SMR" id="Q2YSF1"/>
<dbReference type="KEGG" id="sab:SAB0729"/>
<dbReference type="HOGENOM" id="CLU_025427_0_2_9"/>
<dbReference type="UniPathway" id="UPA00109">
    <property type="reaction ID" value="UER00185"/>
</dbReference>
<dbReference type="GO" id="GO:0005829">
    <property type="term" value="C:cytosol"/>
    <property type="evidence" value="ECO:0007669"/>
    <property type="project" value="TreeGrafter"/>
</dbReference>
<dbReference type="GO" id="GO:0043531">
    <property type="term" value="F:ADP binding"/>
    <property type="evidence" value="ECO:0007669"/>
    <property type="project" value="TreeGrafter"/>
</dbReference>
<dbReference type="GO" id="GO:0005524">
    <property type="term" value="F:ATP binding"/>
    <property type="evidence" value="ECO:0007669"/>
    <property type="project" value="UniProtKB-KW"/>
</dbReference>
<dbReference type="GO" id="GO:0004618">
    <property type="term" value="F:phosphoglycerate kinase activity"/>
    <property type="evidence" value="ECO:0007669"/>
    <property type="project" value="UniProtKB-UniRule"/>
</dbReference>
<dbReference type="GO" id="GO:0006094">
    <property type="term" value="P:gluconeogenesis"/>
    <property type="evidence" value="ECO:0007669"/>
    <property type="project" value="TreeGrafter"/>
</dbReference>
<dbReference type="GO" id="GO:0006096">
    <property type="term" value="P:glycolytic process"/>
    <property type="evidence" value="ECO:0007669"/>
    <property type="project" value="UniProtKB-UniRule"/>
</dbReference>
<dbReference type="CDD" id="cd00318">
    <property type="entry name" value="Phosphoglycerate_kinase"/>
    <property type="match status" value="1"/>
</dbReference>
<dbReference type="FunFam" id="3.40.50.1260:FF:000001">
    <property type="entry name" value="Phosphoglycerate kinase"/>
    <property type="match status" value="1"/>
</dbReference>
<dbReference type="FunFam" id="3.40.50.1260:FF:000008">
    <property type="entry name" value="Phosphoglycerate kinase"/>
    <property type="match status" value="1"/>
</dbReference>
<dbReference type="Gene3D" id="3.40.50.1260">
    <property type="entry name" value="Phosphoglycerate kinase, N-terminal domain"/>
    <property type="match status" value="2"/>
</dbReference>
<dbReference type="HAMAP" id="MF_00145">
    <property type="entry name" value="Phosphoglyc_kinase"/>
    <property type="match status" value="1"/>
</dbReference>
<dbReference type="InterPro" id="IPR001576">
    <property type="entry name" value="Phosphoglycerate_kinase"/>
</dbReference>
<dbReference type="InterPro" id="IPR015911">
    <property type="entry name" value="Phosphoglycerate_kinase_CS"/>
</dbReference>
<dbReference type="InterPro" id="IPR015824">
    <property type="entry name" value="Phosphoglycerate_kinase_N"/>
</dbReference>
<dbReference type="InterPro" id="IPR036043">
    <property type="entry name" value="Phosphoglycerate_kinase_sf"/>
</dbReference>
<dbReference type="PANTHER" id="PTHR11406">
    <property type="entry name" value="PHOSPHOGLYCERATE KINASE"/>
    <property type="match status" value="1"/>
</dbReference>
<dbReference type="PANTHER" id="PTHR11406:SF23">
    <property type="entry name" value="PHOSPHOGLYCERATE KINASE 1, CHLOROPLASTIC-RELATED"/>
    <property type="match status" value="1"/>
</dbReference>
<dbReference type="Pfam" id="PF00162">
    <property type="entry name" value="PGK"/>
    <property type="match status" value="1"/>
</dbReference>
<dbReference type="PIRSF" id="PIRSF000724">
    <property type="entry name" value="Pgk"/>
    <property type="match status" value="1"/>
</dbReference>
<dbReference type="PRINTS" id="PR00477">
    <property type="entry name" value="PHGLYCKINASE"/>
</dbReference>
<dbReference type="SUPFAM" id="SSF53748">
    <property type="entry name" value="Phosphoglycerate kinase"/>
    <property type="match status" value="1"/>
</dbReference>
<dbReference type="PROSITE" id="PS00111">
    <property type="entry name" value="PGLYCERATE_KINASE"/>
    <property type="match status" value="1"/>
</dbReference>
<keyword id="KW-0067">ATP-binding</keyword>
<keyword id="KW-0963">Cytoplasm</keyword>
<keyword id="KW-0324">Glycolysis</keyword>
<keyword id="KW-0418">Kinase</keyword>
<keyword id="KW-0547">Nucleotide-binding</keyword>
<keyword id="KW-0808">Transferase</keyword>
<sequence>MAKKIVSDLDLKGKTVIVRADFNVPLKDGEITNDNRIVQALPTIQYIIEQGGKIVLFSHLGKVKEESDKAKLTLRPVAEDLSKKLDKEVVFVPETRGEKLEAAIKDLKEGDVLLVENTRYEDLDGKKESKNDPELGKYWASLGDVFVNDAFGTAHREHASNVGISTHLETAAGFLMDKEIKFIGGVVNDPHKPVVAILGGAKVSDKINVIKNLVNIADKIIIGGGMAYTFLKAQGKEIGISLLEEDKIDFAKDLLEKHGDKIVLPVDTKVAKEFSNDAKITVVPSDSIPADQEGMDIGPNTVKLFADELEGAHTVVWNGPMGVFEFSNFAQGTIGVCKAIANLKDAITIIGGGDSAAAAISLGFENDFTHISTGGGASLEYLEGKELPGIKAINNK</sequence>
<feature type="chain" id="PRO_1000009650" description="Phosphoglycerate kinase">
    <location>
        <begin position="1"/>
        <end position="396"/>
    </location>
</feature>
<feature type="binding site" evidence="1">
    <location>
        <begin position="21"/>
        <end position="23"/>
    </location>
    <ligand>
        <name>substrate</name>
    </ligand>
</feature>
<feature type="binding site" evidence="1">
    <location>
        <position position="36"/>
    </location>
    <ligand>
        <name>substrate</name>
    </ligand>
</feature>
<feature type="binding site" evidence="1">
    <location>
        <begin position="59"/>
        <end position="62"/>
    </location>
    <ligand>
        <name>substrate</name>
    </ligand>
</feature>
<feature type="binding site" evidence="1">
    <location>
        <position position="119"/>
    </location>
    <ligand>
        <name>substrate</name>
    </ligand>
</feature>
<feature type="binding site" evidence="1">
    <location>
        <position position="156"/>
    </location>
    <ligand>
        <name>substrate</name>
    </ligand>
</feature>
<feature type="binding site" evidence="1">
    <location>
        <position position="206"/>
    </location>
    <ligand>
        <name>ATP</name>
        <dbReference type="ChEBI" id="CHEBI:30616"/>
    </ligand>
</feature>
<feature type="binding site" evidence="1">
    <location>
        <position position="294"/>
    </location>
    <ligand>
        <name>ATP</name>
        <dbReference type="ChEBI" id="CHEBI:30616"/>
    </ligand>
</feature>
<feature type="binding site" evidence="1">
    <location>
        <position position="325"/>
    </location>
    <ligand>
        <name>ATP</name>
        <dbReference type="ChEBI" id="CHEBI:30616"/>
    </ligand>
</feature>
<feature type="binding site" evidence="1">
    <location>
        <begin position="352"/>
        <end position="355"/>
    </location>
    <ligand>
        <name>ATP</name>
        <dbReference type="ChEBI" id="CHEBI:30616"/>
    </ligand>
</feature>
<gene>
    <name evidence="1" type="primary">pgk</name>
    <name type="ordered locus">SAB0729</name>
</gene>
<organism>
    <name type="scientific">Staphylococcus aureus (strain bovine RF122 / ET3-1)</name>
    <dbReference type="NCBI Taxonomy" id="273036"/>
    <lineage>
        <taxon>Bacteria</taxon>
        <taxon>Bacillati</taxon>
        <taxon>Bacillota</taxon>
        <taxon>Bacilli</taxon>
        <taxon>Bacillales</taxon>
        <taxon>Staphylococcaceae</taxon>
        <taxon>Staphylococcus</taxon>
    </lineage>
</organism>
<accession>Q2YSF1</accession>
<proteinExistence type="inferred from homology"/>
<comment type="catalytic activity">
    <reaction evidence="1">
        <text>(2R)-3-phosphoglycerate + ATP = (2R)-3-phospho-glyceroyl phosphate + ADP</text>
        <dbReference type="Rhea" id="RHEA:14801"/>
        <dbReference type="ChEBI" id="CHEBI:30616"/>
        <dbReference type="ChEBI" id="CHEBI:57604"/>
        <dbReference type="ChEBI" id="CHEBI:58272"/>
        <dbReference type="ChEBI" id="CHEBI:456216"/>
        <dbReference type="EC" id="2.7.2.3"/>
    </reaction>
</comment>
<comment type="pathway">
    <text evidence="1">Carbohydrate degradation; glycolysis; pyruvate from D-glyceraldehyde 3-phosphate: step 2/5.</text>
</comment>
<comment type="subunit">
    <text evidence="1">Monomer.</text>
</comment>
<comment type="subcellular location">
    <subcellularLocation>
        <location evidence="1">Cytoplasm</location>
    </subcellularLocation>
</comment>
<comment type="similarity">
    <text evidence="1">Belongs to the phosphoglycerate kinase family.</text>
</comment>
<protein>
    <recommendedName>
        <fullName evidence="1">Phosphoglycerate kinase</fullName>
        <ecNumber evidence="1">2.7.2.3</ecNumber>
    </recommendedName>
</protein>
<reference key="1">
    <citation type="journal article" date="2007" name="PLoS ONE">
        <title>Molecular correlates of host specialization in Staphylococcus aureus.</title>
        <authorList>
            <person name="Herron-Olson L."/>
            <person name="Fitzgerald J.R."/>
            <person name="Musser J.M."/>
            <person name="Kapur V."/>
        </authorList>
    </citation>
    <scope>NUCLEOTIDE SEQUENCE [LARGE SCALE GENOMIC DNA]</scope>
    <source>
        <strain>bovine RF122 / ET3-1</strain>
    </source>
</reference>
<evidence type="ECO:0000255" key="1">
    <source>
        <dbReference type="HAMAP-Rule" id="MF_00145"/>
    </source>
</evidence>
<name>PGK_STAAB</name>